<evidence type="ECO:0000255" key="1">
    <source>
        <dbReference type="HAMAP-Rule" id="MF_01006"/>
    </source>
</evidence>
<keyword id="KW-0046">Antibiotic resistance</keyword>
<keyword id="KW-1003">Cell membrane</keyword>
<keyword id="KW-0133">Cell shape</keyword>
<keyword id="KW-0961">Cell wall biogenesis/degradation</keyword>
<keyword id="KW-0378">Hydrolase</keyword>
<keyword id="KW-0472">Membrane</keyword>
<keyword id="KW-0573">Peptidoglycan synthesis</keyword>
<keyword id="KW-0812">Transmembrane</keyword>
<keyword id="KW-1133">Transmembrane helix</keyword>
<proteinExistence type="inferred from homology"/>
<comment type="function">
    <text evidence="1">Catalyzes the dephosphorylation of undecaprenyl diphosphate (UPP). Confers resistance to bacitracin.</text>
</comment>
<comment type="catalytic activity">
    <reaction evidence="1">
        <text>di-trans,octa-cis-undecaprenyl diphosphate + H2O = di-trans,octa-cis-undecaprenyl phosphate + phosphate + H(+)</text>
        <dbReference type="Rhea" id="RHEA:28094"/>
        <dbReference type="ChEBI" id="CHEBI:15377"/>
        <dbReference type="ChEBI" id="CHEBI:15378"/>
        <dbReference type="ChEBI" id="CHEBI:43474"/>
        <dbReference type="ChEBI" id="CHEBI:58405"/>
        <dbReference type="ChEBI" id="CHEBI:60392"/>
        <dbReference type="EC" id="3.6.1.27"/>
    </reaction>
</comment>
<comment type="subcellular location">
    <subcellularLocation>
        <location evidence="1">Cell membrane</location>
        <topology evidence="1">Multi-pass membrane protein</topology>
    </subcellularLocation>
</comment>
<comment type="miscellaneous">
    <text>Bacitracin is thought to be involved in the inhibition of peptidoglycan synthesis by sequestering undecaprenyl diphosphate, thereby reducing the pool of lipid carrier available.</text>
</comment>
<comment type="similarity">
    <text evidence="1">Belongs to the UppP family.</text>
</comment>
<name>UPPP_LACLS</name>
<gene>
    <name evidence="1" type="primary">uppP</name>
    <name type="ordered locus">LACR_2504</name>
</gene>
<organism>
    <name type="scientific">Lactococcus lactis subsp. cremoris (strain SK11)</name>
    <dbReference type="NCBI Taxonomy" id="272622"/>
    <lineage>
        <taxon>Bacteria</taxon>
        <taxon>Bacillati</taxon>
        <taxon>Bacillota</taxon>
        <taxon>Bacilli</taxon>
        <taxon>Lactobacillales</taxon>
        <taxon>Streptococcaceae</taxon>
        <taxon>Lactococcus</taxon>
        <taxon>Lactococcus cremoris subsp. cremoris</taxon>
    </lineage>
</organism>
<dbReference type="EC" id="3.6.1.27" evidence="1"/>
<dbReference type="EMBL" id="CP000425">
    <property type="protein sequence ID" value="ABJ73934.1"/>
    <property type="molecule type" value="Genomic_DNA"/>
</dbReference>
<dbReference type="RefSeq" id="WP_011677243.1">
    <property type="nucleotide sequence ID" value="NC_008527.1"/>
</dbReference>
<dbReference type="SMR" id="Q02VT8"/>
<dbReference type="KEGG" id="llc:LACR_2504"/>
<dbReference type="HOGENOM" id="CLU_060296_2_0_9"/>
<dbReference type="Proteomes" id="UP000000240">
    <property type="component" value="Chromosome"/>
</dbReference>
<dbReference type="GO" id="GO:0005886">
    <property type="term" value="C:plasma membrane"/>
    <property type="evidence" value="ECO:0007669"/>
    <property type="project" value="UniProtKB-SubCell"/>
</dbReference>
<dbReference type="GO" id="GO:0050380">
    <property type="term" value="F:undecaprenyl-diphosphatase activity"/>
    <property type="evidence" value="ECO:0007669"/>
    <property type="project" value="UniProtKB-UniRule"/>
</dbReference>
<dbReference type="GO" id="GO:0071555">
    <property type="term" value="P:cell wall organization"/>
    <property type="evidence" value="ECO:0007669"/>
    <property type="project" value="UniProtKB-KW"/>
</dbReference>
<dbReference type="GO" id="GO:0009252">
    <property type="term" value="P:peptidoglycan biosynthetic process"/>
    <property type="evidence" value="ECO:0007669"/>
    <property type="project" value="UniProtKB-KW"/>
</dbReference>
<dbReference type="GO" id="GO:0008360">
    <property type="term" value="P:regulation of cell shape"/>
    <property type="evidence" value="ECO:0007669"/>
    <property type="project" value="UniProtKB-KW"/>
</dbReference>
<dbReference type="GO" id="GO:0046677">
    <property type="term" value="P:response to antibiotic"/>
    <property type="evidence" value="ECO:0007669"/>
    <property type="project" value="UniProtKB-UniRule"/>
</dbReference>
<dbReference type="HAMAP" id="MF_01006">
    <property type="entry name" value="Undec_diphosphatase"/>
    <property type="match status" value="1"/>
</dbReference>
<dbReference type="InterPro" id="IPR003824">
    <property type="entry name" value="UppP"/>
</dbReference>
<dbReference type="NCBIfam" id="NF001389">
    <property type="entry name" value="PRK00281.1-2"/>
    <property type="match status" value="1"/>
</dbReference>
<dbReference type="NCBIfam" id="NF001390">
    <property type="entry name" value="PRK00281.1-4"/>
    <property type="match status" value="1"/>
</dbReference>
<dbReference type="NCBIfam" id="NF001391">
    <property type="entry name" value="PRK00281.1-5"/>
    <property type="match status" value="1"/>
</dbReference>
<dbReference type="NCBIfam" id="TIGR00753">
    <property type="entry name" value="undec_PP_bacA"/>
    <property type="match status" value="1"/>
</dbReference>
<dbReference type="PANTHER" id="PTHR30622">
    <property type="entry name" value="UNDECAPRENYL-DIPHOSPHATASE"/>
    <property type="match status" value="1"/>
</dbReference>
<dbReference type="PANTHER" id="PTHR30622:SF3">
    <property type="entry name" value="UNDECAPRENYL-DIPHOSPHATASE"/>
    <property type="match status" value="1"/>
</dbReference>
<dbReference type="Pfam" id="PF02673">
    <property type="entry name" value="BacA"/>
    <property type="match status" value="1"/>
</dbReference>
<reference key="1">
    <citation type="journal article" date="2006" name="Proc. Natl. Acad. Sci. U.S.A.">
        <title>Comparative genomics of the lactic acid bacteria.</title>
        <authorList>
            <person name="Makarova K.S."/>
            <person name="Slesarev A."/>
            <person name="Wolf Y.I."/>
            <person name="Sorokin A."/>
            <person name="Mirkin B."/>
            <person name="Koonin E.V."/>
            <person name="Pavlov A."/>
            <person name="Pavlova N."/>
            <person name="Karamychev V."/>
            <person name="Polouchine N."/>
            <person name="Shakhova V."/>
            <person name="Grigoriev I."/>
            <person name="Lou Y."/>
            <person name="Rohksar D."/>
            <person name="Lucas S."/>
            <person name="Huang K."/>
            <person name="Goodstein D.M."/>
            <person name="Hawkins T."/>
            <person name="Plengvidhya V."/>
            <person name="Welker D."/>
            <person name="Hughes J."/>
            <person name="Goh Y."/>
            <person name="Benson A."/>
            <person name="Baldwin K."/>
            <person name="Lee J.-H."/>
            <person name="Diaz-Muniz I."/>
            <person name="Dosti B."/>
            <person name="Smeianov V."/>
            <person name="Wechter W."/>
            <person name="Barabote R."/>
            <person name="Lorca G."/>
            <person name="Altermann E."/>
            <person name="Barrangou R."/>
            <person name="Ganesan B."/>
            <person name="Xie Y."/>
            <person name="Rawsthorne H."/>
            <person name="Tamir D."/>
            <person name="Parker C."/>
            <person name="Breidt F."/>
            <person name="Broadbent J.R."/>
            <person name="Hutkins R."/>
            <person name="O'Sullivan D."/>
            <person name="Steele J."/>
            <person name="Unlu G."/>
            <person name="Saier M.H. Jr."/>
            <person name="Klaenhammer T."/>
            <person name="Richardson P."/>
            <person name="Kozyavkin S."/>
            <person name="Weimer B.C."/>
            <person name="Mills D.A."/>
        </authorList>
    </citation>
    <scope>NUCLEOTIDE SEQUENCE [LARGE SCALE GENOMIC DNA]</scope>
    <source>
        <strain>SK11</strain>
    </source>
</reference>
<protein>
    <recommendedName>
        <fullName evidence="1">Undecaprenyl-diphosphatase</fullName>
        <ecNumber evidence="1">3.6.1.27</ecNumber>
    </recommendedName>
    <alternativeName>
        <fullName evidence="1">Bacitracin resistance protein</fullName>
    </alternativeName>
    <alternativeName>
        <fullName evidence="1">Undecaprenyl pyrophosphate phosphatase</fullName>
    </alternativeName>
</protein>
<feature type="chain" id="PRO_0000290719" description="Undecaprenyl-diphosphatase">
    <location>
        <begin position="1"/>
        <end position="284"/>
    </location>
</feature>
<feature type="transmembrane region" description="Helical" evidence="1">
    <location>
        <begin position="7"/>
        <end position="27"/>
    </location>
</feature>
<feature type="transmembrane region" description="Helical" evidence="1">
    <location>
        <begin position="44"/>
        <end position="64"/>
    </location>
</feature>
<feature type="transmembrane region" description="Helical" evidence="1">
    <location>
        <begin position="90"/>
        <end position="110"/>
    </location>
</feature>
<feature type="transmembrane region" description="Helical" evidence="1">
    <location>
        <begin position="116"/>
        <end position="136"/>
    </location>
</feature>
<feature type="transmembrane region" description="Helical" evidence="1">
    <location>
        <begin position="167"/>
        <end position="187"/>
    </location>
</feature>
<feature type="transmembrane region" description="Helical" evidence="1">
    <location>
        <begin position="197"/>
        <end position="217"/>
    </location>
</feature>
<feature type="transmembrane region" description="Helical" evidence="1">
    <location>
        <begin position="229"/>
        <end position="249"/>
    </location>
</feature>
<feature type="transmembrane region" description="Helical" evidence="1">
    <location>
        <begin position="259"/>
        <end position="279"/>
    </location>
</feature>
<accession>Q02VT8</accession>
<sequence length="284" mass="32013">MDFIRAIILGIIEGITEWLPISSTGHLIIADEFIRLNQSAAFKEMFDVVIQLGAILSVVVLYFHKLNPFNKLNPADKQKTPREIQLTWRLWLKVLIAALPAAIIGLPLNDWLDKHFYHFVPVAFMLIIYGVAFIVIERRWVPNHEFSVMDIDRLPYRAALYIGLFQVLSLLPGTSRSGATIVGALLIGVSREVAAEFTFFLGIPVMFGASFIKILHFFKNGNSLNLEQFGVLLVACLVAFGVSMIAIKFLTDYVKKHDFTFFGKYRIVLGIVLLIYAAFKAFLG</sequence>